<accession>B3W7E6</accession>
<name>DAPEL_LACCB</name>
<proteinExistence type="inferred from homology"/>
<sequence length="383" mass="42065">MKEADLITLRRQLHQIPELALQEKETHALLLKTIQGLPQTYLTIRTLPDLPTALLVKVQGRDPQRTIGYRTDIDALPVTEKTGLPFASKHSGIAHACGHDIHMTVALGILSYFAEHQPKDNLIFFFQPAEESKNGGKLAYDMGAFTGDWHIDEFYGLHDRPDLPAGTISTRLGTLFAGTTEINVDLIGKSGHAALPQNANDMIVAAASFISQIQTVVARNVGPTDSAVITFGLMRAGTIRNVIAGRAHLEGTLRGFTQQQIDFLQQRIRDIGQGIAASFNCQVKVALNQGGYYPVENNDKLTKDFIQVMKDDPDVTFVDTKPVMTGEDFGYLLNKIPGTMFWLGVNDPDSQLHAADFSPDEAALVPGVTAVVHFLEHRMLEKV</sequence>
<organism>
    <name type="scientific">Lacticaseibacillus casei (strain BL23)</name>
    <name type="common">Lactobacillus casei</name>
    <dbReference type="NCBI Taxonomy" id="543734"/>
    <lineage>
        <taxon>Bacteria</taxon>
        <taxon>Bacillati</taxon>
        <taxon>Bacillota</taxon>
        <taxon>Bacilli</taxon>
        <taxon>Lactobacillales</taxon>
        <taxon>Lactobacillaceae</taxon>
        <taxon>Lacticaseibacillus</taxon>
    </lineage>
</organism>
<dbReference type="EC" id="3.5.1.47" evidence="1"/>
<dbReference type="EMBL" id="FM177140">
    <property type="protein sequence ID" value="CAQ65230.1"/>
    <property type="molecule type" value="Genomic_DNA"/>
</dbReference>
<dbReference type="SMR" id="B3W7E6"/>
<dbReference type="KEGG" id="lcb:LCABL_00980"/>
<dbReference type="HOGENOM" id="CLU_023257_0_1_9"/>
<dbReference type="UniPathway" id="UPA00034">
    <property type="reaction ID" value="UER00024"/>
</dbReference>
<dbReference type="GO" id="GO:0050118">
    <property type="term" value="F:N-acetyldiaminopimelate deacetylase activity"/>
    <property type="evidence" value="ECO:0007669"/>
    <property type="project" value="UniProtKB-UniRule"/>
</dbReference>
<dbReference type="GO" id="GO:0019877">
    <property type="term" value="P:diaminopimelate biosynthetic process"/>
    <property type="evidence" value="ECO:0007669"/>
    <property type="project" value="UniProtKB-UniRule"/>
</dbReference>
<dbReference type="GO" id="GO:0009089">
    <property type="term" value="P:lysine biosynthetic process via diaminopimelate"/>
    <property type="evidence" value="ECO:0007669"/>
    <property type="project" value="UniProtKB-UniRule"/>
</dbReference>
<dbReference type="CDD" id="cd05670">
    <property type="entry name" value="M20_Acy1_YkuR-like"/>
    <property type="match status" value="1"/>
</dbReference>
<dbReference type="FunFam" id="3.30.70.360:FF:000001">
    <property type="entry name" value="N-acetyldiaminopimelate deacetylase"/>
    <property type="match status" value="1"/>
</dbReference>
<dbReference type="Gene3D" id="3.30.70.360">
    <property type="match status" value="1"/>
</dbReference>
<dbReference type="Gene3D" id="3.40.630.10">
    <property type="entry name" value="Zn peptidases"/>
    <property type="match status" value="1"/>
</dbReference>
<dbReference type="HAMAP" id="MF_01692">
    <property type="entry name" value="DapEL"/>
    <property type="match status" value="1"/>
</dbReference>
<dbReference type="InterPro" id="IPR023905">
    <property type="entry name" value="AcetylDAP_deacetylase"/>
</dbReference>
<dbReference type="InterPro" id="IPR017439">
    <property type="entry name" value="Amidohydrolase"/>
</dbReference>
<dbReference type="InterPro" id="IPR036264">
    <property type="entry name" value="Bact_exopeptidase_dim_dom"/>
</dbReference>
<dbReference type="InterPro" id="IPR002933">
    <property type="entry name" value="Peptidase_M20"/>
</dbReference>
<dbReference type="InterPro" id="IPR011650">
    <property type="entry name" value="Peptidase_M20_dimer"/>
</dbReference>
<dbReference type="NCBIfam" id="TIGR01891">
    <property type="entry name" value="amidohydrolases"/>
    <property type="match status" value="1"/>
</dbReference>
<dbReference type="PANTHER" id="PTHR11014:SF98">
    <property type="entry name" value="N-ACETYLDIAMINOPIMELATE DEACETYLASE"/>
    <property type="match status" value="1"/>
</dbReference>
<dbReference type="PANTHER" id="PTHR11014">
    <property type="entry name" value="PEPTIDASE M20 FAMILY MEMBER"/>
    <property type="match status" value="1"/>
</dbReference>
<dbReference type="Pfam" id="PF07687">
    <property type="entry name" value="M20_dimer"/>
    <property type="match status" value="1"/>
</dbReference>
<dbReference type="Pfam" id="PF01546">
    <property type="entry name" value="Peptidase_M20"/>
    <property type="match status" value="1"/>
</dbReference>
<dbReference type="PIRSF" id="PIRSF005962">
    <property type="entry name" value="Pept_M20D_amidohydro"/>
    <property type="match status" value="1"/>
</dbReference>
<dbReference type="SUPFAM" id="SSF55031">
    <property type="entry name" value="Bacterial exopeptidase dimerisation domain"/>
    <property type="match status" value="1"/>
</dbReference>
<dbReference type="SUPFAM" id="SSF53187">
    <property type="entry name" value="Zn-dependent exopeptidases"/>
    <property type="match status" value="1"/>
</dbReference>
<feature type="chain" id="PRO_0000376759" description="N-acetyldiaminopimelate deacetylase">
    <location>
        <begin position="1"/>
        <end position="383"/>
    </location>
</feature>
<feature type="active site" evidence="1">
    <location>
        <position position="72"/>
    </location>
</feature>
<feature type="active site" description="Proton acceptor" evidence="1">
    <location>
        <position position="131"/>
    </location>
</feature>
<evidence type="ECO:0000255" key="1">
    <source>
        <dbReference type="HAMAP-Rule" id="MF_01692"/>
    </source>
</evidence>
<gene>
    <name type="ordered locus">LCABL_00980</name>
</gene>
<keyword id="KW-0028">Amino-acid biosynthesis</keyword>
<keyword id="KW-0220">Diaminopimelate biosynthesis</keyword>
<keyword id="KW-0378">Hydrolase</keyword>
<keyword id="KW-0457">Lysine biosynthesis</keyword>
<protein>
    <recommendedName>
        <fullName evidence="1">N-acetyldiaminopimelate deacetylase</fullName>
        <ecNumber evidence="1">3.5.1.47</ecNumber>
    </recommendedName>
</protein>
<comment type="function">
    <text evidence="1">Catalyzes the conversion of N-acetyl-diaminopimelate to diaminopimelate and acetate.</text>
</comment>
<comment type="catalytic activity">
    <reaction evidence="1">
        <text>N-acetyl-(2S,6S)-2,6-diaminopimelate + H2O = (2S,6S)-2,6-diaminopimelate + acetate</text>
        <dbReference type="Rhea" id="RHEA:20405"/>
        <dbReference type="ChEBI" id="CHEBI:15377"/>
        <dbReference type="ChEBI" id="CHEBI:30089"/>
        <dbReference type="ChEBI" id="CHEBI:57609"/>
        <dbReference type="ChEBI" id="CHEBI:58767"/>
        <dbReference type="EC" id="3.5.1.47"/>
    </reaction>
</comment>
<comment type="pathway">
    <text evidence="1">Amino-acid biosynthesis; L-lysine biosynthesis via DAP pathway; LL-2,6-diaminopimelate from (S)-tetrahydrodipicolinate (acetylase route): step 3/3.</text>
</comment>
<comment type="similarity">
    <text evidence="1">Belongs to the peptidase M20A family. N-acetyldiaminopimelate deacetylase subfamily.</text>
</comment>
<reference key="1">
    <citation type="submission" date="2008-06" db="EMBL/GenBank/DDBJ databases">
        <title>Lactobacillus casei BL23 complete genome sequence.</title>
        <authorList>
            <person name="Maze A."/>
            <person name="Boel G."/>
            <person name="Bourand A."/>
            <person name="Loux V."/>
            <person name="Gibrat J.F."/>
            <person name="Zuniga M."/>
            <person name="Hartke A."/>
            <person name="Deutscher J."/>
        </authorList>
    </citation>
    <scope>NUCLEOTIDE SEQUENCE [LARGE SCALE GENOMIC DNA]</scope>
    <source>
        <strain>BL23</strain>
    </source>
</reference>